<feature type="chain" id="PRO_0000212602" description="Metal transporter Nramp5">
    <location>
        <begin position="1"/>
        <end position="530"/>
    </location>
</feature>
<feature type="transmembrane region" description="Helical" evidence="2">
    <location>
        <begin position="65"/>
        <end position="85"/>
    </location>
</feature>
<feature type="transmembrane region" description="Helical" evidence="2">
    <location>
        <begin position="98"/>
        <end position="118"/>
    </location>
</feature>
<feature type="transmembrane region" description="Helical" evidence="2">
    <location>
        <begin position="147"/>
        <end position="167"/>
    </location>
</feature>
<feature type="transmembrane region" description="Helical" evidence="2">
    <location>
        <begin position="179"/>
        <end position="199"/>
    </location>
</feature>
<feature type="transmembrane region" description="Helical" evidence="2">
    <location>
        <begin position="207"/>
        <end position="227"/>
    </location>
</feature>
<feature type="transmembrane region" description="Helical" evidence="2">
    <location>
        <begin position="253"/>
        <end position="273"/>
    </location>
</feature>
<feature type="transmembrane region" description="Helical" evidence="2">
    <location>
        <begin position="299"/>
        <end position="319"/>
    </location>
</feature>
<feature type="transmembrane region" description="Helical" evidence="2">
    <location>
        <begin position="341"/>
        <end position="361"/>
    </location>
</feature>
<feature type="transmembrane region" description="Helical" evidence="2">
    <location>
        <begin position="387"/>
        <end position="407"/>
    </location>
</feature>
<feature type="transmembrane region" description="Helical" evidence="2">
    <location>
        <begin position="429"/>
        <end position="449"/>
    </location>
</feature>
<feature type="transmembrane region" description="Helical" evidence="2">
    <location>
        <begin position="458"/>
        <end position="478"/>
    </location>
</feature>
<feature type="transmembrane region" description="Helical" evidence="2">
    <location>
        <begin position="485"/>
        <end position="505"/>
    </location>
</feature>
<feature type="region of interest" description="Disordered" evidence="3">
    <location>
        <begin position="1"/>
        <end position="53"/>
    </location>
</feature>
<feature type="compositionally biased region" description="Polar residues" evidence="3">
    <location>
        <begin position="1"/>
        <end position="10"/>
    </location>
</feature>
<feature type="compositionally biased region" description="Basic and acidic residues" evidence="3">
    <location>
        <begin position="11"/>
        <end position="27"/>
    </location>
</feature>
<protein>
    <recommendedName>
        <fullName>Metal transporter Nramp5</fullName>
        <shortName>AtNramp5</shortName>
    </recommendedName>
</protein>
<name>NRAM5_ARATH</name>
<comment type="function">
    <text evidence="1">Seems to be involved in iron uptake.</text>
</comment>
<comment type="subcellular location">
    <subcellularLocation>
        <location evidence="4">Membrane</location>
        <topology evidence="4">Multi-pass membrane protein</topology>
    </subcellularLocation>
</comment>
<comment type="similarity">
    <text evidence="4">Belongs to the NRAMP (TC 2.A.55) family.</text>
</comment>
<gene>
    <name type="primary">NRAMP5</name>
    <name type="ordered locus">At4g18790</name>
    <name type="ORF">F28A21.200</name>
</gene>
<keyword id="KW-0406">Ion transport</keyword>
<keyword id="KW-0408">Iron</keyword>
<keyword id="KW-0410">Iron transport</keyword>
<keyword id="KW-0472">Membrane</keyword>
<keyword id="KW-1185">Reference proteome</keyword>
<keyword id="KW-0812">Transmembrane</keyword>
<keyword id="KW-1133">Transmembrane helix</keyword>
<keyword id="KW-0813">Transport</keyword>
<sequence length="530" mass="58781">MTGSTVSRQENSPKRPNDSNGEFKRLLVPETSQPEEDELHESPPENQILNVEEDRDKTYDSVPPFSWAKLWKFTGPGFLMSIAFLDPGNIEGDLQAGAVAGYSLLWLLLWATLMGLLMQLLSARIGVATGRHLAEICRSEYPSWARILLWFMAEVALIGADIQEVIGSAIALQILTRGFLPIWVGVIITSFDCFLISYLEKCGMRKLEGLFAVLIATMALSFAWMFNETKPSVEELFIGIIIPKLGSKTIREAVGVVGCVITPHNVFLHSALVQSRKTDPKEINRVQEALNYYTIESSAALFVSFMINLFVTAVFAKGFYGTKQADSIGLVNAGYYLQEKYGGGVFPILYIWGIGLLAAGQSSTITGTYAGQFIMEGFLDLQMEQWLSAFITRSFAIVPTMFVAIMFNTSEGSLDVLNEWLNILQSMQIPFAVIPLLTMVSNEHIMGVFKIGPSLEKLAWTVAVFVMMINGYLLLDFFMAEVEGFLVGFLVFGGVVGYISFIIYLVSYRSSQSSSWSSLEMSERVVSTET</sequence>
<accession>Q9SN36</accession>
<reference key="1">
    <citation type="submission" date="2001-01" db="EMBL/GenBank/DDBJ databases">
        <title>Identification of Nramp5, a heavy metal transporter in Arabidopsis thaliana.</title>
        <authorList>
            <person name="Pittman J.K."/>
            <person name="Hall J.L."/>
            <person name="Williams L.E."/>
        </authorList>
    </citation>
    <scope>NUCLEOTIDE SEQUENCE [MRNA]</scope>
    <source>
        <strain>cv. Landsberg erecta</strain>
    </source>
</reference>
<reference key="2">
    <citation type="journal article" date="1999" name="Nature">
        <title>Sequence and analysis of chromosome 4 of the plant Arabidopsis thaliana.</title>
        <authorList>
            <person name="Mayer K.F.X."/>
            <person name="Schueller C."/>
            <person name="Wambutt R."/>
            <person name="Murphy G."/>
            <person name="Volckaert G."/>
            <person name="Pohl T."/>
            <person name="Duesterhoeft A."/>
            <person name="Stiekema W."/>
            <person name="Entian K.-D."/>
            <person name="Terryn N."/>
            <person name="Harris B."/>
            <person name="Ansorge W."/>
            <person name="Brandt P."/>
            <person name="Grivell L.A."/>
            <person name="Rieger M."/>
            <person name="Weichselgartner M."/>
            <person name="de Simone V."/>
            <person name="Obermaier B."/>
            <person name="Mache R."/>
            <person name="Mueller M."/>
            <person name="Kreis M."/>
            <person name="Delseny M."/>
            <person name="Puigdomenech P."/>
            <person name="Watson M."/>
            <person name="Schmidtheini T."/>
            <person name="Reichert B."/>
            <person name="Portetelle D."/>
            <person name="Perez-Alonso M."/>
            <person name="Boutry M."/>
            <person name="Bancroft I."/>
            <person name="Vos P."/>
            <person name="Hoheisel J."/>
            <person name="Zimmermann W."/>
            <person name="Wedler H."/>
            <person name="Ridley P."/>
            <person name="Langham S.-A."/>
            <person name="McCullagh B."/>
            <person name="Bilham L."/>
            <person name="Robben J."/>
            <person name="van der Schueren J."/>
            <person name="Grymonprez B."/>
            <person name="Chuang Y.-J."/>
            <person name="Vandenbussche F."/>
            <person name="Braeken M."/>
            <person name="Weltjens I."/>
            <person name="Voet M."/>
            <person name="Bastiaens I."/>
            <person name="Aert R."/>
            <person name="Defoor E."/>
            <person name="Weitzenegger T."/>
            <person name="Bothe G."/>
            <person name="Ramsperger U."/>
            <person name="Hilbert H."/>
            <person name="Braun M."/>
            <person name="Holzer E."/>
            <person name="Brandt A."/>
            <person name="Peters S."/>
            <person name="van Staveren M."/>
            <person name="Dirkse W."/>
            <person name="Mooijman P."/>
            <person name="Klein Lankhorst R."/>
            <person name="Rose M."/>
            <person name="Hauf J."/>
            <person name="Koetter P."/>
            <person name="Berneiser S."/>
            <person name="Hempel S."/>
            <person name="Feldpausch M."/>
            <person name="Lamberth S."/>
            <person name="Van den Daele H."/>
            <person name="De Keyser A."/>
            <person name="Buysshaert C."/>
            <person name="Gielen J."/>
            <person name="Villarroel R."/>
            <person name="De Clercq R."/>
            <person name="van Montagu M."/>
            <person name="Rogers J."/>
            <person name="Cronin A."/>
            <person name="Quail M.A."/>
            <person name="Bray-Allen S."/>
            <person name="Clark L."/>
            <person name="Doggett J."/>
            <person name="Hall S."/>
            <person name="Kay M."/>
            <person name="Lennard N."/>
            <person name="McLay K."/>
            <person name="Mayes R."/>
            <person name="Pettett A."/>
            <person name="Rajandream M.A."/>
            <person name="Lyne M."/>
            <person name="Benes V."/>
            <person name="Rechmann S."/>
            <person name="Borkova D."/>
            <person name="Bloecker H."/>
            <person name="Scharfe M."/>
            <person name="Grimm M."/>
            <person name="Loehnert T.-H."/>
            <person name="Dose S."/>
            <person name="de Haan M."/>
            <person name="Maarse A.C."/>
            <person name="Schaefer M."/>
            <person name="Mueller-Auer S."/>
            <person name="Gabel C."/>
            <person name="Fuchs M."/>
            <person name="Fartmann B."/>
            <person name="Granderath K."/>
            <person name="Dauner D."/>
            <person name="Herzl A."/>
            <person name="Neumann S."/>
            <person name="Argiriou A."/>
            <person name="Vitale D."/>
            <person name="Liguori R."/>
            <person name="Piravandi E."/>
            <person name="Massenet O."/>
            <person name="Quigley F."/>
            <person name="Clabauld G."/>
            <person name="Muendlein A."/>
            <person name="Felber R."/>
            <person name="Schnabl S."/>
            <person name="Hiller R."/>
            <person name="Schmidt W."/>
            <person name="Lecharny A."/>
            <person name="Aubourg S."/>
            <person name="Chefdor F."/>
            <person name="Cooke R."/>
            <person name="Berger C."/>
            <person name="Monfort A."/>
            <person name="Casacuberta E."/>
            <person name="Gibbons T."/>
            <person name="Weber N."/>
            <person name="Vandenbol M."/>
            <person name="Bargues M."/>
            <person name="Terol J."/>
            <person name="Torres A."/>
            <person name="Perez-Perez A."/>
            <person name="Purnelle B."/>
            <person name="Bent E."/>
            <person name="Johnson S."/>
            <person name="Tacon D."/>
            <person name="Jesse T."/>
            <person name="Heijnen L."/>
            <person name="Schwarz S."/>
            <person name="Scholler P."/>
            <person name="Heber S."/>
            <person name="Francs P."/>
            <person name="Bielke C."/>
            <person name="Frishman D."/>
            <person name="Haase D."/>
            <person name="Lemcke K."/>
            <person name="Mewes H.-W."/>
            <person name="Stocker S."/>
            <person name="Zaccaria P."/>
            <person name="Bevan M."/>
            <person name="Wilson R.K."/>
            <person name="de la Bastide M."/>
            <person name="Habermann K."/>
            <person name="Parnell L."/>
            <person name="Dedhia N."/>
            <person name="Gnoj L."/>
            <person name="Schutz K."/>
            <person name="Huang E."/>
            <person name="Spiegel L."/>
            <person name="Sekhon M."/>
            <person name="Murray J."/>
            <person name="Sheet P."/>
            <person name="Cordes M."/>
            <person name="Abu-Threideh J."/>
            <person name="Stoneking T."/>
            <person name="Kalicki J."/>
            <person name="Graves T."/>
            <person name="Harmon G."/>
            <person name="Edwards J."/>
            <person name="Latreille P."/>
            <person name="Courtney L."/>
            <person name="Cloud J."/>
            <person name="Abbott A."/>
            <person name="Scott K."/>
            <person name="Johnson D."/>
            <person name="Minx P."/>
            <person name="Bentley D."/>
            <person name="Fulton B."/>
            <person name="Miller N."/>
            <person name="Greco T."/>
            <person name="Kemp K."/>
            <person name="Kramer J."/>
            <person name="Fulton L."/>
            <person name="Mardis E."/>
            <person name="Dante M."/>
            <person name="Pepin K."/>
            <person name="Hillier L.W."/>
            <person name="Nelson J."/>
            <person name="Spieth J."/>
            <person name="Ryan E."/>
            <person name="Andrews S."/>
            <person name="Geisel C."/>
            <person name="Layman D."/>
            <person name="Du H."/>
            <person name="Ali J."/>
            <person name="Berghoff A."/>
            <person name="Jones K."/>
            <person name="Drone K."/>
            <person name="Cotton M."/>
            <person name="Joshu C."/>
            <person name="Antonoiu B."/>
            <person name="Zidanic M."/>
            <person name="Strong C."/>
            <person name="Sun H."/>
            <person name="Lamar B."/>
            <person name="Yordan C."/>
            <person name="Ma P."/>
            <person name="Zhong J."/>
            <person name="Preston R."/>
            <person name="Vil D."/>
            <person name="Shekher M."/>
            <person name="Matero A."/>
            <person name="Shah R."/>
            <person name="Swaby I.K."/>
            <person name="O'Shaughnessy A."/>
            <person name="Rodriguez M."/>
            <person name="Hoffman J."/>
            <person name="Till S."/>
            <person name="Granat S."/>
            <person name="Shohdy N."/>
            <person name="Hasegawa A."/>
            <person name="Hameed A."/>
            <person name="Lodhi M."/>
            <person name="Johnson A."/>
            <person name="Chen E."/>
            <person name="Marra M.A."/>
            <person name="Martienssen R."/>
            <person name="McCombie W.R."/>
        </authorList>
    </citation>
    <scope>NUCLEOTIDE SEQUENCE [LARGE SCALE GENOMIC DNA]</scope>
    <source>
        <strain>cv. Columbia</strain>
    </source>
</reference>
<reference key="3">
    <citation type="journal article" date="2017" name="Plant J.">
        <title>Araport11: a complete reannotation of the Arabidopsis thaliana reference genome.</title>
        <authorList>
            <person name="Cheng C.Y."/>
            <person name="Krishnakumar V."/>
            <person name="Chan A.P."/>
            <person name="Thibaud-Nissen F."/>
            <person name="Schobel S."/>
            <person name="Town C.D."/>
        </authorList>
    </citation>
    <scope>GENOME REANNOTATION</scope>
    <source>
        <strain>cv. Columbia</strain>
    </source>
</reference>
<organism>
    <name type="scientific">Arabidopsis thaliana</name>
    <name type="common">Mouse-ear cress</name>
    <dbReference type="NCBI Taxonomy" id="3702"/>
    <lineage>
        <taxon>Eukaryota</taxon>
        <taxon>Viridiplantae</taxon>
        <taxon>Streptophyta</taxon>
        <taxon>Embryophyta</taxon>
        <taxon>Tracheophyta</taxon>
        <taxon>Spermatophyta</taxon>
        <taxon>Magnoliopsida</taxon>
        <taxon>eudicotyledons</taxon>
        <taxon>Gunneridae</taxon>
        <taxon>Pentapetalae</taxon>
        <taxon>rosids</taxon>
        <taxon>malvids</taxon>
        <taxon>Brassicales</taxon>
        <taxon>Brassicaceae</taxon>
        <taxon>Camelineae</taxon>
        <taxon>Arabidopsis</taxon>
    </lineage>
</organism>
<proteinExistence type="evidence at transcript level"/>
<evidence type="ECO:0000250" key="1"/>
<evidence type="ECO:0000255" key="2"/>
<evidence type="ECO:0000256" key="3">
    <source>
        <dbReference type="SAM" id="MobiDB-lite"/>
    </source>
</evidence>
<evidence type="ECO:0000305" key="4"/>
<dbReference type="EMBL" id="AJ292076">
    <property type="protein sequence ID" value="CAC27822.1"/>
    <property type="molecule type" value="mRNA"/>
</dbReference>
<dbReference type="EMBL" id="AL035526">
    <property type="protein sequence ID" value="CAB37464.1"/>
    <property type="molecule type" value="Genomic_DNA"/>
</dbReference>
<dbReference type="EMBL" id="AL161549">
    <property type="protein sequence ID" value="CAB78881.1"/>
    <property type="molecule type" value="Genomic_DNA"/>
</dbReference>
<dbReference type="EMBL" id="CP002687">
    <property type="protein sequence ID" value="AEE84090.1"/>
    <property type="molecule type" value="Genomic_DNA"/>
</dbReference>
<dbReference type="PIR" id="T04871">
    <property type="entry name" value="T04871"/>
</dbReference>
<dbReference type="RefSeq" id="NP_193614.1">
    <property type="nucleotide sequence ID" value="NM_117995.2"/>
</dbReference>
<dbReference type="SMR" id="Q9SN36"/>
<dbReference type="FunCoup" id="Q9SN36">
    <property type="interactions" value="1913"/>
</dbReference>
<dbReference type="STRING" id="3702.Q9SN36"/>
<dbReference type="iPTMnet" id="Q9SN36"/>
<dbReference type="PaxDb" id="3702-AT4G18790.1"/>
<dbReference type="ProteomicsDB" id="239058"/>
<dbReference type="EnsemblPlants" id="AT4G18790.1">
    <property type="protein sequence ID" value="AT4G18790.1"/>
    <property type="gene ID" value="AT4G18790"/>
</dbReference>
<dbReference type="GeneID" id="827613"/>
<dbReference type="Gramene" id="AT4G18790.1">
    <property type="protein sequence ID" value="AT4G18790.1"/>
    <property type="gene ID" value="AT4G18790"/>
</dbReference>
<dbReference type="KEGG" id="ath:AT4G18790"/>
<dbReference type="Araport" id="AT4G18790"/>
<dbReference type="TAIR" id="AT4G18790">
    <property type="gene designation" value="NRAMP5"/>
</dbReference>
<dbReference type="eggNOG" id="KOG1291">
    <property type="taxonomic scope" value="Eukaryota"/>
</dbReference>
<dbReference type="HOGENOM" id="CLU_020088_5_1_1"/>
<dbReference type="InParanoid" id="Q9SN36"/>
<dbReference type="OMA" id="CRNEYPS"/>
<dbReference type="PhylomeDB" id="Q9SN36"/>
<dbReference type="PRO" id="PR:Q9SN36"/>
<dbReference type="Proteomes" id="UP000006548">
    <property type="component" value="Chromosome 4"/>
</dbReference>
<dbReference type="ExpressionAtlas" id="Q9SN36">
    <property type="expression patterns" value="baseline and differential"/>
</dbReference>
<dbReference type="GO" id="GO:0016020">
    <property type="term" value="C:membrane"/>
    <property type="evidence" value="ECO:0007669"/>
    <property type="project" value="UniProtKB-SubCell"/>
</dbReference>
<dbReference type="GO" id="GO:0046873">
    <property type="term" value="F:metal ion transmembrane transporter activity"/>
    <property type="evidence" value="ECO:0007669"/>
    <property type="project" value="InterPro"/>
</dbReference>
<dbReference type="GO" id="GO:0006826">
    <property type="term" value="P:iron ion transport"/>
    <property type="evidence" value="ECO:0007669"/>
    <property type="project" value="UniProtKB-KW"/>
</dbReference>
<dbReference type="HAMAP" id="MF_00221">
    <property type="entry name" value="NRAMP"/>
    <property type="match status" value="1"/>
</dbReference>
<dbReference type="InterPro" id="IPR001046">
    <property type="entry name" value="NRAMP_fam"/>
</dbReference>
<dbReference type="NCBIfam" id="TIGR01197">
    <property type="entry name" value="nramp"/>
    <property type="match status" value="1"/>
</dbReference>
<dbReference type="NCBIfam" id="NF037982">
    <property type="entry name" value="Nramp_1"/>
    <property type="match status" value="1"/>
</dbReference>
<dbReference type="PANTHER" id="PTHR11706:SF88">
    <property type="entry name" value="METAL TRANSPORTER NRAMP5"/>
    <property type="match status" value="1"/>
</dbReference>
<dbReference type="PANTHER" id="PTHR11706">
    <property type="entry name" value="SOLUTE CARRIER PROTEIN FAMILY 11 MEMBER"/>
    <property type="match status" value="1"/>
</dbReference>
<dbReference type="Pfam" id="PF01566">
    <property type="entry name" value="Nramp"/>
    <property type="match status" value="1"/>
</dbReference>
<dbReference type="PRINTS" id="PR00447">
    <property type="entry name" value="NATRESASSCMP"/>
</dbReference>